<gene>
    <name evidence="1" type="primary">rbfA</name>
    <name type="ordered locus">CTL0350</name>
</gene>
<keyword id="KW-0963">Cytoplasm</keyword>
<keyword id="KW-0690">Ribosome biogenesis</keyword>
<dbReference type="EMBL" id="AM884176">
    <property type="protein sequence ID" value="CAP03790.1"/>
    <property type="molecule type" value="Genomic_DNA"/>
</dbReference>
<dbReference type="RefSeq" id="WP_009871443.1">
    <property type="nucleotide sequence ID" value="NC_010287.1"/>
</dbReference>
<dbReference type="RefSeq" id="YP_001654434.1">
    <property type="nucleotide sequence ID" value="NC_010287.1"/>
</dbReference>
<dbReference type="SMR" id="B0B9K3"/>
<dbReference type="KEGG" id="ctb:CTL0350"/>
<dbReference type="PATRIC" id="fig|471472.4.peg.378"/>
<dbReference type="HOGENOM" id="CLU_089475_6_3_0"/>
<dbReference type="Proteomes" id="UP001154402">
    <property type="component" value="Chromosome"/>
</dbReference>
<dbReference type="GO" id="GO:0005829">
    <property type="term" value="C:cytosol"/>
    <property type="evidence" value="ECO:0007669"/>
    <property type="project" value="TreeGrafter"/>
</dbReference>
<dbReference type="GO" id="GO:0043024">
    <property type="term" value="F:ribosomal small subunit binding"/>
    <property type="evidence" value="ECO:0007669"/>
    <property type="project" value="TreeGrafter"/>
</dbReference>
<dbReference type="GO" id="GO:0030490">
    <property type="term" value="P:maturation of SSU-rRNA"/>
    <property type="evidence" value="ECO:0007669"/>
    <property type="project" value="UniProtKB-UniRule"/>
</dbReference>
<dbReference type="FunFam" id="3.30.300.20:FF:000040">
    <property type="entry name" value="Ribosome-binding factor A"/>
    <property type="match status" value="1"/>
</dbReference>
<dbReference type="Gene3D" id="3.30.300.20">
    <property type="match status" value="1"/>
</dbReference>
<dbReference type="HAMAP" id="MF_00003">
    <property type="entry name" value="RbfA"/>
    <property type="match status" value="1"/>
</dbReference>
<dbReference type="InterPro" id="IPR015946">
    <property type="entry name" value="KH_dom-like_a/b"/>
</dbReference>
<dbReference type="InterPro" id="IPR000238">
    <property type="entry name" value="RbfA"/>
</dbReference>
<dbReference type="InterPro" id="IPR023799">
    <property type="entry name" value="RbfA_dom_sf"/>
</dbReference>
<dbReference type="NCBIfam" id="TIGR00082">
    <property type="entry name" value="rbfA"/>
    <property type="match status" value="1"/>
</dbReference>
<dbReference type="PANTHER" id="PTHR33515">
    <property type="entry name" value="RIBOSOME-BINDING FACTOR A, CHLOROPLASTIC-RELATED"/>
    <property type="match status" value="1"/>
</dbReference>
<dbReference type="PANTHER" id="PTHR33515:SF1">
    <property type="entry name" value="RIBOSOME-BINDING FACTOR A, CHLOROPLASTIC-RELATED"/>
    <property type="match status" value="1"/>
</dbReference>
<dbReference type="Pfam" id="PF02033">
    <property type="entry name" value="RBFA"/>
    <property type="match status" value="1"/>
</dbReference>
<dbReference type="SUPFAM" id="SSF89919">
    <property type="entry name" value="Ribosome-binding factor A, RbfA"/>
    <property type="match status" value="1"/>
</dbReference>
<accession>B0B9K3</accession>
<proteinExistence type="inferred from homology"/>
<evidence type="ECO:0000255" key="1">
    <source>
        <dbReference type="HAMAP-Rule" id="MF_00003"/>
    </source>
</evidence>
<protein>
    <recommendedName>
        <fullName evidence="1">Ribosome-binding factor A</fullName>
    </recommendedName>
</protein>
<organism>
    <name type="scientific">Chlamydia trachomatis serovar L2 (strain ATCC VR-902B / DSM 19102 / 434/Bu)</name>
    <dbReference type="NCBI Taxonomy" id="471472"/>
    <lineage>
        <taxon>Bacteria</taxon>
        <taxon>Pseudomonadati</taxon>
        <taxon>Chlamydiota</taxon>
        <taxon>Chlamydiia</taxon>
        <taxon>Chlamydiales</taxon>
        <taxon>Chlamydiaceae</taxon>
        <taxon>Chlamydia/Chlamydophila group</taxon>
        <taxon>Chlamydia</taxon>
    </lineage>
</organism>
<sequence length="123" mass="14061">MAENRRMKKVNAMLREAIAKVILKDVKHPKISNRWITITRVSLSRDLQSACVYVSIMPHENSQEETLAALKASAGFIAFQASKDLVLKYFPDLNFYVEDIFSPQDHIESLLLKIAEQDKKTNP</sequence>
<comment type="function">
    <text evidence="1">One of several proteins that assist in the late maturation steps of the functional core of the 30S ribosomal subunit. Associates with free 30S ribosomal subunits (but not with 30S subunits that are part of 70S ribosomes or polysomes). Required for efficient processing of 16S rRNA. May interact with the 5'-terminal helix region of 16S rRNA.</text>
</comment>
<comment type="subunit">
    <text evidence="1">Monomer. Binds 30S ribosomal subunits, but not 50S ribosomal subunits or 70S ribosomes.</text>
</comment>
<comment type="subcellular location">
    <subcellularLocation>
        <location evidence="1">Cytoplasm</location>
    </subcellularLocation>
</comment>
<comment type="similarity">
    <text evidence="1">Belongs to the RbfA family.</text>
</comment>
<name>RBFA_CHLT2</name>
<feature type="chain" id="PRO_1000088871" description="Ribosome-binding factor A">
    <location>
        <begin position="1"/>
        <end position="123"/>
    </location>
</feature>
<reference key="1">
    <citation type="journal article" date="2008" name="Genome Res.">
        <title>Chlamydia trachomatis: genome sequence analysis of lymphogranuloma venereum isolates.</title>
        <authorList>
            <person name="Thomson N.R."/>
            <person name="Holden M.T.G."/>
            <person name="Carder C."/>
            <person name="Lennard N."/>
            <person name="Lockey S.J."/>
            <person name="Marsh P."/>
            <person name="Skipp P."/>
            <person name="O'Connor C.D."/>
            <person name="Goodhead I."/>
            <person name="Norbertzcak H."/>
            <person name="Harris B."/>
            <person name="Ormond D."/>
            <person name="Rance R."/>
            <person name="Quail M.A."/>
            <person name="Parkhill J."/>
            <person name="Stephens R.S."/>
            <person name="Clarke I.N."/>
        </authorList>
    </citation>
    <scope>NUCLEOTIDE SEQUENCE [LARGE SCALE GENOMIC DNA]</scope>
    <source>
        <strain>ATCC VR-902B / DSM 19102 / 434/Bu</strain>
    </source>
</reference>